<proteinExistence type="inferred from homology"/>
<gene>
    <name evidence="1" type="primary">rpmB</name>
    <name evidence="1" type="synonym">rpl28</name>
    <name type="ordered locus">sync_1399</name>
</gene>
<accession>Q0IAB7</accession>
<evidence type="ECO:0000255" key="1">
    <source>
        <dbReference type="HAMAP-Rule" id="MF_00373"/>
    </source>
</evidence>
<evidence type="ECO:0000305" key="2"/>
<protein>
    <recommendedName>
        <fullName evidence="1">Large ribosomal subunit protein bL28</fullName>
    </recommendedName>
    <alternativeName>
        <fullName evidence="2">50S ribosomal protein L28</fullName>
    </alternativeName>
</protein>
<reference key="1">
    <citation type="journal article" date="2006" name="Proc. Natl. Acad. Sci. U.S.A.">
        <title>Genome sequence of Synechococcus CC9311: insights into adaptation to a coastal environment.</title>
        <authorList>
            <person name="Palenik B."/>
            <person name="Ren Q."/>
            <person name="Dupont C.L."/>
            <person name="Myers G.S."/>
            <person name="Heidelberg J.F."/>
            <person name="Badger J.H."/>
            <person name="Madupu R."/>
            <person name="Nelson W.C."/>
            <person name="Brinkac L.M."/>
            <person name="Dodson R.J."/>
            <person name="Durkin A.S."/>
            <person name="Daugherty S.C."/>
            <person name="Sullivan S.A."/>
            <person name="Khouri H."/>
            <person name="Mohamoud Y."/>
            <person name="Halpin R."/>
            <person name="Paulsen I.T."/>
        </authorList>
    </citation>
    <scope>NUCLEOTIDE SEQUENCE [LARGE SCALE GENOMIC DNA]</scope>
    <source>
        <strain>CC9311</strain>
    </source>
</reference>
<sequence>MSRVCQLTGTRANNGMAVSHSHIRTKKLQQANLQQRRLWWAEGKRWINLRITTRALKTIQKKGLGAYARSLGINLAKL</sequence>
<keyword id="KW-1185">Reference proteome</keyword>
<keyword id="KW-0687">Ribonucleoprotein</keyword>
<keyword id="KW-0689">Ribosomal protein</keyword>
<comment type="similarity">
    <text evidence="1">Belongs to the bacterial ribosomal protein bL28 family.</text>
</comment>
<feature type="chain" id="PRO_1000007388" description="Large ribosomal subunit protein bL28">
    <location>
        <begin position="1"/>
        <end position="78"/>
    </location>
</feature>
<name>RL28_SYNS3</name>
<dbReference type="EMBL" id="CP000435">
    <property type="protein sequence ID" value="ABI45527.1"/>
    <property type="molecule type" value="Genomic_DNA"/>
</dbReference>
<dbReference type="RefSeq" id="WP_006852613.1">
    <property type="nucleotide sequence ID" value="NC_008319.1"/>
</dbReference>
<dbReference type="SMR" id="Q0IAB7"/>
<dbReference type="STRING" id="64471.sync_1399"/>
<dbReference type="KEGG" id="syg:sync_1399"/>
<dbReference type="eggNOG" id="COG0227">
    <property type="taxonomic scope" value="Bacteria"/>
</dbReference>
<dbReference type="HOGENOM" id="CLU_064548_3_0_3"/>
<dbReference type="OrthoDB" id="9805609at2"/>
<dbReference type="Proteomes" id="UP000001961">
    <property type="component" value="Chromosome"/>
</dbReference>
<dbReference type="GO" id="GO:1990904">
    <property type="term" value="C:ribonucleoprotein complex"/>
    <property type="evidence" value="ECO:0007669"/>
    <property type="project" value="UniProtKB-KW"/>
</dbReference>
<dbReference type="GO" id="GO:0005840">
    <property type="term" value="C:ribosome"/>
    <property type="evidence" value="ECO:0007669"/>
    <property type="project" value="UniProtKB-KW"/>
</dbReference>
<dbReference type="GO" id="GO:0003735">
    <property type="term" value="F:structural constituent of ribosome"/>
    <property type="evidence" value="ECO:0007669"/>
    <property type="project" value="InterPro"/>
</dbReference>
<dbReference type="GO" id="GO:0006412">
    <property type="term" value="P:translation"/>
    <property type="evidence" value="ECO:0007669"/>
    <property type="project" value="UniProtKB-UniRule"/>
</dbReference>
<dbReference type="Gene3D" id="2.30.170.40">
    <property type="entry name" value="Ribosomal protein L28/L24"/>
    <property type="match status" value="1"/>
</dbReference>
<dbReference type="HAMAP" id="MF_00373">
    <property type="entry name" value="Ribosomal_bL28"/>
    <property type="match status" value="1"/>
</dbReference>
<dbReference type="InterPro" id="IPR026569">
    <property type="entry name" value="Ribosomal_bL28"/>
</dbReference>
<dbReference type="InterPro" id="IPR034704">
    <property type="entry name" value="Ribosomal_bL28/bL31-like_sf"/>
</dbReference>
<dbReference type="InterPro" id="IPR001383">
    <property type="entry name" value="Ribosomal_bL28_bact-type"/>
</dbReference>
<dbReference type="InterPro" id="IPR037147">
    <property type="entry name" value="Ribosomal_bL28_sf"/>
</dbReference>
<dbReference type="NCBIfam" id="TIGR00009">
    <property type="entry name" value="L28"/>
    <property type="match status" value="1"/>
</dbReference>
<dbReference type="PANTHER" id="PTHR13528">
    <property type="entry name" value="39S RIBOSOMAL PROTEIN L28, MITOCHONDRIAL"/>
    <property type="match status" value="1"/>
</dbReference>
<dbReference type="PANTHER" id="PTHR13528:SF2">
    <property type="entry name" value="LARGE RIBOSOMAL SUBUNIT PROTEIN BL28M"/>
    <property type="match status" value="1"/>
</dbReference>
<dbReference type="Pfam" id="PF00830">
    <property type="entry name" value="Ribosomal_L28"/>
    <property type="match status" value="1"/>
</dbReference>
<dbReference type="SUPFAM" id="SSF143800">
    <property type="entry name" value="L28p-like"/>
    <property type="match status" value="1"/>
</dbReference>
<organism>
    <name type="scientific">Synechococcus sp. (strain CC9311)</name>
    <dbReference type="NCBI Taxonomy" id="64471"/>
    <lineage>
        <taxon>Bacteria</taxon>
        <taxon>Bacillati</taxon>
        <taxon>Cyanobacteriota</taxon>
        <taxon>Cyanophyceae</taxon>
        <taxon>Synechococcales</taxon>
        <taxon>Synechococcaceae</taxon>
        <taxon>Synechococcus</taxon>
    </lineage>
</organism>